<protein>
    <recommendedName>
        <fullName evidence="1">Imidazoleglycerol-phosphate dehydratase</fullName>
        <shortName evidence="1">IGPD</shortName>
        <ecNumber evidence="1">4.2.1.19</ecNumber>
    </recommendedName>
</protein>
<accession>Q5HCM1</accession>
<feature type="chain" id="PRO_0000158165" description="Imidazoleglycerol-phosphate dehydratase">
    <location>
        <begin position="1"/>
        <end position="192"/>
    </location>
</feature>
<organism>
    <name type="scientific">Staphylococcus aureus (strain COL)</name>
    <dbReference type="NCBI Taxonomy" id="93062"/>
    <lineage>
        <taxon>Bacteria</taxon>
        <taxon>Bacillati</taxon>
        <taxon>Bacillota</taxon>
        <taxon>Bacilli</taxon>
        <taxon>Bacillales</taxon>
        <taxon>Staphylococcaceae</taxon>
        <taxon>Staphylococcus</taxon>
    </lineage>
</organism>
<sequence>MIYQKQRNTAETQLNISISDDQSPSHINTGVGFLNHMLTLFTFHSGLSLNIEAQGDIDVDDHHVTEDIGIVIGQLLLEMIKDKKHFVRYGTMYIPMDETLARVVVDISGRPYLSFNASLSKEKVGTFDTELVEEFFRAVVINARLTTHIDLIRGGNTHHEIEAIFKAFSRALGIALTATDDQRVPSSKGVIE</sequence>
<reference key="1">
    <citation type="journal article" date="2005" name="J. Bacteriol.">
        <title>Insights on evolution of virulence and resistance from the complete genome analysis of an early methicillin-resistant Staphylococcus aureus strain and a biofilm-producing methicillin-resistant Staphylococcus epidermidis strain.</title>
        <authorList>
            <person name="Gill S.R."/>
            <person name="Fouts D.E."/>
            <person name="Archer G.L."/>
            <person name="Mongodin E.F."/>
            <person name="DeBoy R.T."/>
            <person name="Ravel J."/>
            <person name="Paulsen I.T."/>
            <person name="Kolonay J.F."/>
            <person name="Brinkac L.M."/>
            <person name="Beanan M.J."/>
            <person name="Dodson R.J."/>
            <person name="Daugherty S.C."/>
            <person name="Madupu R."/>
            <person name="Angiuoli S.V."/>
            <person name="Durkin A.S."/>
            <person name="Haft D.H."/>
            <person name="Vamathevan J.J."/>
            <person name="Khouri H."/>
            <person name="Utterback T.R."/>
            <person name="Lee C."/>
            <person name="Dimitrov G."/>
            <person name="Jiang L."/>
            <person name="Qin H."/>
            <person name="Weidman J."/>
            <person name="Tran K."/>
            <person name="Kang K.H."/>
            <person name="Hance I.R."/>
            <person name="Nelson K.E."/>
            <person name="Fraser C.M."/>
        </authorList>
    </citation>
    <scope>NUCLEOTIDE SEQUENCE [LARGE SCALE GENOMIC DNA]</scope>
    <source>
        <strain>COL</strain>
    </source>
</reference>
<gene>
    <name evidence="1" type="primary">hisB</name>
    <name type="ordered locus">SACOL2700</name>
</gene>
<dbReference type="EC" id="4.2.1.19" evidence="1"/>
<dbReference type="EMBL" id="CP000046">
    <property type="protein sequence ID" value="AAW37348.1"/>
    <property type="molecule type" value="Genomic_DNA"/>
</dbReference>
<dbReference type="RefSeq" id="WP_000640266.1">
    <property type="nucleotide sequence ID" value="NZ_JBGOFO010000001.1"/>
</dbReference>
<dbReference type="SMR" id="Q5HCM1"/>
<dbReference type="KEGG" id="sac:SACOL2700"/>
<dbReference type="HOGENOM" id="CLU_044308_3_0_9"/>
<dbReference type="UniPathway" id="UPA00031">
    <property type="reaction ID" value="UER00011"/>
</dbReference>
<dbReference type="Proteomes" id="UP000000530">
    <property type="component" value="Chromosome"/>
</dbReference>
<dbReference type="GO" id="GO:0005737">
    <property type="term" value="C:cytoplasm"/>
    <property type="evidence" value="ECO:0007669"/>
    <property type="project" value="UniProtKB-SubCell"/>
</dbReference>
<dbReference type="GO" id="GO:0004424">
    <property type="term" value="F:imidazoleglycerol-phosphate dehydratase activity"/>
    <property type="evidence" value="ECO:0007669"/>
    <property type="project" value="UniProtKB-UniRule"/>
</dbReference>
<dbReference type="GO" id="GO:0000105">
    <property type="term" value="P:L-histidine biosynthetic process"/>
    <property type="evidence" value="ECO:0007669"/>
    <property type="project" value="UniProtKB-UniRule"/>
</dbReference>
<dbReference type="CDD" id="cd07914">
    <property type="entry name" value="IGPD"/>
    <property type="match status" value="1"/>
</dbReference>
<dbReference type="FunFam" id="3.30.230.40:FF:000001">
    <property type="entry name" value="Imidazoleglycerol-phosphate dehydratase HisB"/>
    <property type="match status" value="1"/>
</dbReference>
<dbReference type="FunFam" id="3.30.230.40:FF:000003">
    <property type="entry name" value="Imidazoleglycerol-phosphate dehydratase HisB"/>
    <property type="match status" value="1"/>
</dbReference>
<dbReference type="Gene3D" id="3.30.230.40">
    <property type="entry name" value="Imidazole glycerol phosphate dehydratase, domain 1"/>
    <property type="match status" value="2"/>
</dbReference>
<dbReference type="HAMAP" id="MF_00076">
    <property type="entry name" value="HisB"/>
    <property type="match status" value="1"/>
</dbReference>
<dbReference type="InterPro" id="IPR038494">
    <property type="entry name" value="IGPD_sf"/>
</dbReference>
<dbReference type="InterPro" id="IPR000807">
    <property type="entry name" value="ImidazoleglycerolP_deHydtase"/>
</dbReference>
<dbReference type="InterPro" id="IPR020565">
    <property type="entry name" value="ImidazoleglycerP_deHydtase_CS"/>
</dbReference>
<dbReference type="InterPro" id="IPR020568">
    <property type="entry name" value="Ribosomal_Su5_D2-typ_SF"/>
</dbReference>
<dbReference type="NCBIfam" id="NF002107">
    <property type="entry name" value="PRK00951.1-2"/>
    <property type="match status" value="1"/>
</dbReference>
<dbReference type="NCBIfam" id="NF002111">
    <property type="entry name" value="PRK00951.2-1"/>
    <property type="match status" value="1"/>
</dbReference>
<dbReference type="NCBIfam" id="NF002114">
    <property type="entry name" value="PRK00951.2-4"/>
    <property type="match status" value="1"/>
</dbReference>
<dbReference type="PANTHER" id="PTHR23133:SF2">
    <property type="entry name" value="IMIDAZOLEGLYCEROL-PHOSPHATE DEHYDRATASE"/>
    <property type="match status" value="1"/>
</dbReference>
<dbReference type="PANTHER" id="PTHR23133">
    <property type="entry name" value="IMIDAZOLEGLYCEROL-PHOSPHATE DEHYDRATASE HIS7"/>
    <property type="match status" value="1"/>
</dbReference>
<dbReference type="Pfam" id="PF00475">
    <property type="entry name" value="IGPD"/>
    <property type="match status" value="1"/>
</dbReference>
<dbReference type="SUPFAM" id="SSF54211">
    <property type="entry name" value="Ribosomal protein S5 domain 2-like"/>
    <property type="match status" value="2"/>
</dbReference>
<dbReference type="PROSITE" id="PS00954">
    <property type="entry name" value="IGP_DEHYDRATASE_1"/>
    <property type="match status" value="1"/>
</dbReference>
<dbReference type="PROSITE" id="PS00955">
    <property type="entry name" value="IGP_DEHYDRATASE_2"/>
    <property type="match status" value="1"/>
</dbReference>
<name>HIS7_STAAC</name>
<keyword id="KW-0028">Amino-acid biosynthesis</keyword>
<keyword id="KW-0963">Cytoplasm</keyword>
<keyword id="KW-0368">Histidine biosynthesis</keyword>
<keyword id="KW-0456">Lyase</keyword>
<proteinExistence type="inferred from homology"/>
<comment type="catalytic activity">
    <reaction evidence="1">
        <text>D-erythro-1-(imidazol-4-yl)glycerol 3-phosphate = 3-(imidazol-4-yl)-2-oxopropyl phosphate + H2O</text>
        <dbReference type="Rhea" id="RHEA:11040"/>
        <dbReference type="ChEBI" id="CHEBI:15377"/>
        <dbReference type="ChEBI" id="CHEBI:57766"/>
        <dbReference type="ChEBI" id="CHEBI:58278"/>
        <dbReference type="EC" id="4.2.1.19"/>
    </reaction>
</comment>
<comment type="pathway">
    <text evidence="1">Amino-acid biosynthesis; L-histidine biosynthesis; L-histidine from 5-phospho-alpha-D-ribose 1-diphosphate: step 6/9.</text>
</comment>
<comment type="subcellular location">
    <subcellularLocation>
        <location evidence="1">Cytoplasm</location>
    </subcellularLocation>
</comment>
<comment type="similarity">
    <text evidence="1">Belongs to the imidazoleglycerol-phosphate dehydratase family.</text>
</comment>
<evidence type="ECO:0000255" key="1">
    <source>
        <dbReference type="HAMAP-Rule" id="MF_00076"/>
    </source>
</evidence>